<keyword id="KW-0903">Direct protein sequencing</keyword>
<keyword id="KW-1185">Reference proteome</keyword>
<dbReference type="EMBL" id="CU683718">
    <property type="status" value="NOT_ANNOTATED_CDS"/>
    <property type="molecule type" value="mRNA"/>
</dbReference>
<dbReference type="InParanoid" id="P86786"/>
<dbReference type="Proteomes" id="UP000005408">
    <property type="component" value="Unplaced"/>
</dbReference>
<dbReference type="InterPro" id="IPR055188">
    <property type="entry name" value="Choice_anch_I"/>
</dbReference>
<dbReference type="InterPro" id="IPR052956">
    <property type="entry name" value="Mesenchyme-surface_protein"/>
</dbReference>
<dbReference type="PANTHER" id="PTHR46928">
    <property type="entry name" value="MESENCHYME-SPECIFIC CELL SURFACE GLYCOPROTEIN"/>
    <property type="match status" value="1"/>
</dbReference>
<dbReference type="PANTHER" id="PTHR46928:SF1">
    <property type="entry name" value="MESENCHYME-SPECIFIC CELL SURFACE GLYCOPROTEIN"/>
    <property type="match status" value="1"/>
</dbReference>
<dbReference type="Pfam" id="PF22494">
    <property type="entry name" value="choice_anch_I"/>
    <property type="match status" value="1"/>
</dbReference>
<organism>
    <name type="scientific">Magallana gigas</name>
    <name type="common">Pacific oyster</name>
    <name type="synonym">Crassostrea gigas</name>
    <dbReference type="NCBI Taxonomy" id="29159"/>
    <lineage>
        <taxon>Eukaryota</taxon>
        <taxon>Metazoa</taxon>
        <taxon>Spiralia</taxon>
        <taxon>Lophotrochozoa</taxon>
        <taxon>Mollusca</taxon>
        <taxon>Bivalvia</taxon>
        <taxon>Autobranchia</taxon>
        <taxon>Pteriomorphia</taxon>
        <taxon>Ostreida</taxon>
        <taxon>Ostreoidea</taxon>
        <taxon>Ostreidae</taxon>
        <taxon>Magallana</taxon>
    </lineage>
</organism>
<sequence length="284" mass="31304">LQWARKRKIPSIQHDALLGKLSVSTQEGRLRDGTHDKLYSYGGRGFSVLRSDTMERIYDSGSIVEESHAMQYPKLFNSYAKSSVNITDTQDSRSDSKGPECESLAVAYSGTRVIVFVGCERPGTISIYSFNSNMTEGTLESIYSGAKTVLGTWGEAFDGGLLTDMDTDDIKYLPPFQSPTGQPLLVVTGSDTGTVSLFHVRGLDNPLPNPRVNSRVPVKPLQSSPLPESTPKSSTKTSSASPIKSRQGKKLRGKKQNKTGNTRFTYRNNKRNIKFKAGRKNNRN</sequence>
<feature type="chain" id="PRO_0000403308" description="Gigasin-3a">
    <location>
        <begin position="1" status="less than"/>
        <end position="284"/>
    </location>
</feature>
<feature type="region of interest" description="Disordered" evidence="1">
    <location>
        <begin position="202"/>
        <end position="284"/>
    </location>
</feature>
<feature type="compositionally biased region" description="Low complexity" evidence="1">
    <location>
        <begin position="223"/>
        <end position="245"/>
    </location>
</feature>
<feature type="compositionally biased region" description="Basic residues" evidence="1">
    <location>
        <begin position="246"/>
        <end position="257"/>
    </location>
</feature>
<feature type="compositionally biased region" description="Polar residues" evidence="1">
    <location>
        <begin position="258"/>
        <end position="267"/>
    </location>
</feature>
<feature type="compositionally biased region" description="Basic residues" evidence="1">
    <location>
        <begin position="268"/>
        <end position="284"/>
    </location>
</feature>
<feature type="non-terminal residue" evidence="5">
    <location>
        <position position="1"/>
    </location>
</feature>
<reference evidence="5" key="1">
    <citation type="journal article" date="2009" name="BMC Genomics">
        <title>Generation and analysis of a 29,745 unique Expressed Sequence Tags from the Pacific oyster (Crassostrea gigas) assembled into a publicly accessible database: the GigasDatabase.</title>
        <authorList>
            <person name="Fleury E."/>
            <person name="Huvet A."/>
            <person name="Lelong C."/>
            <person name="de Lorgeril J."/>
            <person name="Boulo V."/>
            <person name="Gueguen Y."/>
            <person name="Bachere E."/>
            <person name="Tanguy A."/>
            <person name="Moraga D."/>
            <person name="Fabioux C."/>
            <person name="Lindeque P."/>
            <person name="Shaw J."/>
            <person name="Reinhardt R."/>
            <person name="Prunet P."/>
            <person name="Davey G."/>
            <person name="Lapegue S."/>
            <person name="Sauvage C."/>
            <person name="Corporeau C."/>
            <person name="Moal J."/>
            <person name="Gavory F."/>
            <person name="Wincker P."/>
            <person name="Moreews F."/>
            <person name="Klopp C."/>
            <person name="Mathieu M."/>
            <person name="Boudry P."/>
            <person name="Favrel P."/>
        </authorList>
    </citation>
    <scope>NUCLEOTIDE SEQUENCE [MRNA]</scope>
    <source>
        <tissue evidence="2">Mantle</tissue>
    </source>
</reference>
<reference evidence="5" key="2">
    <citation type="journal article" date="2010" name="FEBS Lett.">
        <title>Proteomic identification of novel proteins from the calcifying shell matrix of the Pacific oyster Crassostrea gigas.</title>
        <authorList>
            <person name="Marie B."/>
            <person name="Zanella-Cleon I."/>
            <person name="Becchi M."/>
            <person name="Marin F."/>
        </authorList>
    </citation>
    <scope>PROTEIN SEQUENCE OF 38-44; 75-81; 202-211 AND 216-232</scope>
    <scope>TISSUE SPECIFICITY</scope>
    <source>
        <tissue evidence="3">Shell</tissue>
    </source>
</reference>
<protein>
    <recommendedName>
        <fullName evidence="4">Gigasin-3a</fullName>
    </recommendedName>
</protein>
<evidence type="ECO:0000256" key="1">
    <source>
        <dbReference type="SAM" id="MobiDB-lite"/>
    </source>
</evidence>
<evidence type="ECO:0000269" key="2">
    <source>
    </source>
</evidence>
<evidence type="ECO:0000269" key="3">
    <source ref="2"/>
</evidence>
<evidence type="ECO:0000303" key="4">
    <source ref="2"/>
</evidence>
<evidence type="ECO:0000305" key="5"/>
<name>GIGA3_MAGGI</name>
<proteinExistence type="evidence at protein level"/>
<accession>P86786</accession>
<comment type="tissue specificity">
    <text evidence="3">Component of the organic matrix of calcified shell layers.</text>
</comment>